<feature type="chain" id="PRO_0000435113" description="Homeobox-DDT domain protein RLT1">
    <location>
        <begin position="1"/>
        <end position="1705"/>
    </location>
</feature>
<feature type="domain" description="DDT" evidence="1">
    <location>
        <begin position="549"/>
        <end position="608"/>
    </location>
</feature>
<feature type="domain" description="HTH HARE-type" evidence="3">
    <location>
        <begin position="731"/>
        <end position="800"/>
    </location>
</feature>
<feature type="DNA-binding region" description="Homeobox" evidence="2">
    <location>
        <begin position="39"/>
        <end position="98"/>
    </location>
</feature>
<feature type="region of interest" description="Disordered" evidence="4">
    <location>
        <begin position="1"/>
        <end position="53"/>
    </location>
</feature>
<feature type="region of interest" description="Disordered" evidence="4">
    <location>
        <begin position="118"/>
        <end position="167"/>
    </location>
</feature>
<feature type="region of interest" description="Disordered" evidence="4">
    <location>
        <begin position="237"/>
        <end position="267"/>
    </location>
</feature>
<feature type="region of interest" description="Disordered" evidence="4">
    <location>
        <begin position="296"/>
        <end position="322"/>
    </location>
</feature>
<feature type="region of interest" description="Disordered" evidence="4">
    <location>
        <begin position="352"/>
        <end position="414"/>
    </location>
</feature>
<feature type="region of interest" description="Disordered" evidence="4">
    <location>
        <begin position="1028"/>
        <end position="1053"/>
    </location>
</feature>
<feature type="region of interest" description="Disordered" evidence="4">
    <location>
        <begin position="1198"/>
        <end position="1229"/>
    </location>
</feature>
<feature type="region of interest" description="Disordered" evidence="4">
    <location>
        <begin position="1441"/>
        <end position="1502"/>
    </location>
</feature>
<feature type="region of interest" description="Disordered" evidence="4">
    <location>
        <begin position="1561"/>
        <end position="1635"/>
    </location>
</feature>
<feature type="region of interest" description="Disordered" evidence="4">
    <location>
        <begin position="1652"/>
        <end position="1705"/>
    </location>
</feature>
<feature type="compositionally biased region" description="Low complexity" evidence="4">
    <location>
        <begin position="136"/>
        <end position="159"/>
    </location>
</feature>
<feature type="compositionally biased region" description="Polar residues" evidence="4">
    <location>
        <begin position="253"/>
        <end position="265"/>
    </location>
</feature>
<feature type="compositionally biased region" description="Polar residues" evidence="4">
    <location>
        <begin position="310"/>
        <end position="319"/>
    </location>
</feature>
<feature type="compositionally biased region" description="Low complexity" evidence="4">
    <location>
        <begin position="1201"/>
        <end position="1220"/>
    </location>
</feature>
<feature type="compositionally biased region" description="Basic and acidic residues" evidence="4">
    <location>
        <begin position="1455"/>
        <end position="1465"/>
    </location>
</feature>
<feature type="compositionally biased region" description="Acidic residues" evidence="4">
    <location>
        <begin position="1565"/>
        <end position="1574"/>
    </location>
</feature>
<feature type="compositionally biased region" description="Acidic residues" evidence="4">
    <location>
        <begin position="1611"/>
        <end position="1628"/>
    </location>
</feature>
<feature type="compositionally biased region" description="Acidic residues" evidence="4">
    <location>
        <begin position="1669"/>
        <end position="1684"/>
    </location>
</feature>
<reference key="1">
    <citation type="journal article" date="2000" name="Nature">
        <title>Sequence and analysis of chromosome 1 of the plant Arabidopsis thaliana.</title>
        <authorList>
            <person name="Theologis A."/>
            <person name="Ecker J.R."/>
            <person name="Palm C.J."/>
            <person name="Federspiel N.A."/>
            <person name="Kaul S."/>
            <person name="White O."/>
            <person name="Alonso J."/>
            <person name="Altafi H."/>
            <person name="Araujo R."/>
            <person name="Bowman C.L."/>
            <person name="Brooks S.Y."/>
            <person name="Buehler E."/>
            <person name="Chan A."/>
            <person name="Chao Q."/>
            <person name="Chen H."/>
            <person name="Cheuk R.F."/>
            <person name="Chin C.W."/>
            <person name="Chung M.K."/>
            <person name="Conn L."/>
            <person name="Conway A.B."/>
            <person name="Conway A.R."/>
            <person name="Creasy T.H."/>
            <person name="Dewar K."/>
            <person name="Dunn P."/>
            <person name="Etgu P."/>
            <person name="Feldblyum T.V."/>
            <person name="Feng J.-D."/>
            <person name="Fong B."/>
            <person name="Fujii C.Y."/>
            <person name="Gill J.E."/>
            <person name="Goldsmith A.D."/>
            <person name="Haas B."/>
            <person name="Hansen N.F."/>
            <person name="Hughes B."/>
            <person name="Huizar L."/>
            <person name="Hunter J.L."/>
            <person name="Jenkins J."/>
            <person name="Johnson-Hopson C."/>
            <person name="Khan S."/>
            <person name="Khaykin E."/>
            <person name="Kim C.J."/>
            <person name="Koo H.L."/>
            <person name="Kremenetskaia I."/>
            <person name="Kurtz D.B."/>
            <person name="Kwan A."/>
            <person name="Lam B."/>
            <person name="Langin-Hooper S."/>
            <person name="Lee A."/>
            <person name="Lee J.M."/>
            <person name="Lenz C.A."/>
            <person name="Li J.H."/>
            <person name="Li Y.-P."/>
            <person name="Lin X."/>
            <person name="Liu S.X."/>
            <person name="Liu Z.A."/>
            <person name="Luros J.S."/>
            <person name="Maiti R."/>
            <person name="Marziali A."/>
            <person name="Militscher J."/>
            <person name="Miranda M."/>
            <person name="Nguyen M."/>
            <person name="Nierman W.C."/>
            <person name="Osborne B.I."/>
            <person name="Pai G."/>
            <person name="Peterson J."/>
            <person name="Pham P.K."/>
            <person name="Rizzo M."/>
            <person name="Rooney T."/>
            <person name="Rowley D."/>
            <person name="Sakano H."/>
            <person name="Salzberg S.L."/>
            <person name="Schwartz J.R."/>
            <person name="Shinn P."/>
            <person name="Southwick A.M."/>
            <person name="Sun H."/>
            <person name="Tallon L.J."/>
            <person name="Tambunga G."/>
            <person name="Toriumi M.J."/>
            <person name="Town C.D."/>
            <person name="Utterback T."/>
            <person name="Van Aken S."/>
            <person name="Vaysberg M."/>
            <person name="Vysotskaia V.S."/>
            <person name="Walker M."/>
            <person name="Wu D."/>
            <person name="Yu G."/>
            <person name="Fraser C.M."/>
            <person name="Venter J.C."/>
            <person name="Davis R.W."/>
        </authorList>
    </citation>
    <scope>NUCLEOTIDE SEQUENCE [LARGE SCALE GENOMIC DNA]</scope>
    <source>
        <strain>cv. Columbia</strain>
    </source>
</reference>
<reference key="2">
    <citation type="journal article" date="2017" name="Plant J.">
        <title>Araport11: a complete reannotation of the Arabidopsis thaliana reference genome.</title>
        <authorList>
            <person name="Cheng C.Y."/>
            <person name="Krishnakumar V."/>
            <person name="Chan A.P."/>
            <person name="Thibaud-Nissen F."/>
            <person name="Schobel S."/>
            <person name="Town C.D."/>
        </authorList>
    </citation>
    <scope>GENOME REANNOTATION</scope>
    <source>
        <strain>cv. Columbia</strain>
    </source>
</reference>
<reference key="3">
    <citation type="journal article" date="2012" name="Plant J.">
        <title>Imitation Switch chromatin remodeling factors and their interacting RINGLET proteins act together in controlling the plant vegetative phase in Arabidopsis.</title>
        <authorList>
            <person name="Li G."/>
            <person name="Zhang J."/>
            <person name="Li J."/>
            <person name="Yang Z."/>
            <person name="Huang H."/>
            <person name="Xu L."/>
        </authorList>
    </citation>
    <scope>FUNCTION</scope>
    <scope>INTERACTION WITH CHR11 AND CHR17</scope>
    <scope>TISSUE SPECIFICITY</scope>
    <scope>DISRUPTION PHENOTYPE</scope>
</reference>
<reference key="4">
    <citation type="journal article" date="2013" name="J. Integr. Plant Biol.">
        <title>SLIDE, the protein interacting domain of Imitation Switch remodelers, binds DDT-domain proteins of different subfamilies in chromatin remodeling complexes.</title>
        <authorList>
            <person name="Dong J."/>
            <person name="Gao Z."/>
            <person name="Liu S."/>
            <person name="Li G."/>
            <person name="Yang Z."/>
            <person name="Huang H."/>
            <person name="Xu L."/>
        </authorList>
    </citation>
    <scope>INTERACTION WITH CHR11</scope>
</reference>
<accession>F4HY56</accession>
<accession>Q9SGP0</accession>
<dbReference type="EMBL" id="AC010155">
    <property type="protein sequence ID" value="AAF16763.1"/>
    <property type="status" value="ALT_SEQ"/>
    <property type="molecule type" value="Genomic_DNA"/>
</dbReference>
<dbReference type="EMBL" id="CP002684">
    <property type="protein sequence ID" value="AEE30975.1"/>
    <property type="molecule type" value="Genomic_DNA"/>
</dbReference>
<dbReference type="PIR" id="E86410">
    <property type="entry name" value="E86410"/>
</dbReference>
<dbReference type="RefSeq" id="NP_174164.2">
    <property type="nucleotide sequence ID" value="NM_102610.4"/>
</dbReference>
<dbReference type="SMR" id="F4HY56"/>
<dbReference type="FunCoup" id="F4HY56">
    <property type="interactions" value="573"/>
</dbReference>
<dbReference type="STRING" id="3702.F4HY56"/>
<dbReference type="GlyGen" id="F4HY56">
    <property type="glycosylation" value="1 site"/>
</dbReference>
<dbReference type="iPTMnet" id="F4HY56"/>
<dbReference type="PaxDb" id="3702-AT1G28420.1"/>
<dbReference type="ProteomicsDB" id="227991"/>
<dbReference type="EnsemblPlants" id="AT1G28420.1">
    <property type="protein sequence ID" value="AT1G28420.1"/>
    <property type="gene ID" value="AT1G28420"/>
</dbReference>
<dbReference type="GeneID" id="839740"/>
<dbReference type="Gramene" id="AT1G28420.1">
    <property type="protein sequence ID" value="AT1G28420.1"/>
    <property type="gene ID" value="AT1G28420"/>
</dbReference>
<dbReference type="KEGG" id="ath:AT1G28420"/>
<dbReference type="Araport" id="AT1G28420"/>
<dbReference type="TAIR" id="AT1G28420">
    <property type="gene designation" value="HB-1"/>
</dbReference>
<dbReference type="eggNOG" id="ENOG502QQYM">
    <property type="taxonomic scope" value="Eukaryota"/>
</dbReference>
<dbReference type="HOGENOM" id="CLU_001241_0_1_1"/>
<dbReference type="InParanoid" id="F4HY56"/>
<dbReference type="OMA" id="LTEGEYC"/>
<dbReference type="CD-CODE" id="4299E36E">
    <property type="entry name" value="Nucleolus"/>
</dbReference>
<dbReference type="PRO" id="PR:F4HY56"/>
<dbReference type="Proteomes" id="UP000006548">
    <property type="component" value="Chromosome 1"/>
</dbReference>
<dbReference type="ExpressionAtlas" id="F4HY56">
    <property type="expression patterns" value="baseline and differential"/>
</dbReference>
<dbReference type="GO" id="GO:0031010">
    <property type="term" value="C:ISWI-type complex"/>
    <property type="evidence" value="ECO:0000314"/>
    <property type="project" value="TAIR"/>
</dbReference>
<dbReference type="GO" id="GO:0003677">
    <property type="term" value="F:DNA binding"/>
    <property type="evidence" value="ECO:0007669"/>
    <property type="project" value="UniProtKB-KW"/>
</dbReference>
<dbReference type="GO" id="GO:0003700">
    <property type="term" value="F:DNA-binding transcription factor activity"/>
    <property type="evidence" value="ECO:0000250"/>
    <property type="project" value="TAIR"/>
</dbReference>
<dbReference type="GO" id="GO:0009908">
    <property type="term" value="P:flower development"/>
    <property type="evidence" value="ECO:0007669"/>
    <property type="project" value="UniProtKB-KW"/>
</dbReference>
<dbReference type="GO" id="GO:0045892">
    <property type="term" value="P:negative regulation of DNA-templated transcription"/>
    <property type="evidence" value="ECO:0000315"/>
    <property type="project" value="UniProtKB"/>
</dbReference>
<dbReference type="GO" id="GO:0048510">
    <property type="term" value="P:regulation of timing of transition from vegetative to reproductive phase"/>
    <property type="evidence" value="ECO:0000315"/>
    <property type="project" value="UniProtKB"/>
</dbReference>
<dbReference type="GO" id="GO:0006357">
    <property type="term" value="P:regulation of transcription by RNA polymerase II"/>
    <property type="evidence" value="ECO:0007669"/>
    <property type="project" value="InterPro"/>
</dbReference>
<dbReference type="GO" id="GO:0010228">
    <property type="term" value="P:vegetative to reproductive phase transition of meristem"/>
    <property type="evidence" value="ECO:0000316"/>
    <property type="project" value="TAIR"/>
</dbReference>
<dbReference type="CDD" id="cd00086">
    <property type="entry name" value="homeodomain"/>
    <property type="match status" value="1"/>
</dbReference>
<dbReference type="FunFam" id="1.10.10.60:FF:000020">
    <property type="entry name" value="Ceramide synthase 5"/>
    <property type="match status" value="1"/>
</dbReference>
<dbReference type="Gene3D" id="1.10.10.60">
    <property type="entry name" value="Homeodomain-like"/>
    <property type="match status" value="1"/>
</dbReference>
<dbReference type="InterPro" id="IPR007759">
    <property type="entry name" value="Asxl_HARE-HTH"/>
</dbReference>
<dbReference type="InterPro" id="IPR018501">
    <property type="entry name" value="DDT_dom"/>
</dbReference>
<dbReference type="InterPro" id="IPR001356">
    <property type="entry name" value="HD"/>
</dbReference>
<dbReference type="InterPro" id="IPR009057">
    <property type="entry name" value="Homeodomain-like_sf"/>
</dbReference>
<dbReference type="InterPro" id="IPR044977">
    <property type="entry name" value="RLT1-3"/>
</dbReference>
<dbReference type="InterPro" id="IPR028942">
    <property type="entry name" value="WHIM1_dom"/>
</dbReference>
<dbReference type="InterPro" id="IPR028941">
    <property type="entry name" value="WHIM2_dom"/>
</dbReference>
<dbReference type="PANTHER" id="PTHR36968:SF13">
    <property type="entry name" value="HOMEOBOX-DDT DOMAIN PROTEIN RLT1"/>
    <property type="match status" value="1"/>
</dbReference>
<dbReference type="PANTHER" id="PTHR36968">
    <property type="entry name" value="HOMEOBOX-DDT DOMAIN PROTEIN RLT2"/>
    <property type="match status" value="1"/>
</dbReference>
<dbReference type="Pfam" id="PF02791">
    <property type="entry name" value="DDT"/>
    <property type="match status" value="1"/>
</dbReference>
<dbReference type="Pfam" id="PF05066">
    <property type="entry name" value="HARE-HTH"/>
    <property type="match status" value="1"/>
</dbReference>
<dbReference type="Pfam" id="PF00046">
    <property type="entry name" value="Homeodomain"/>
    <property type="match status" value="1"/>
</dbReference>
<dbReference type="Pfam" id="PF15612">
    <property type="entry name" value="WHIM1"/>
    <property type="match status" value="1"/>
</dbReference>
<dbReference type="Pfam" id="PF15613">
    <property type="entry name" value="WSD"/>
    <property type="match status" value="1"/>
</dbReference>
<dbReference type="SMART" id="SM00571">
    <property type="entry name" value="DDT"/>
    <property type="match status" value="1"/>
</dbReference>
<dbReference type="SMART" id="SM00389">
    <property type="entry name" value="HOX"/>
    <property type="match status" value="1"/>
</dbReference>
<dbReference type="SUPFAM" id="SSF46689">
    <property type="entry name" value="Homeodomain-like"/>
    <property type="match status" value="1"/>
</dbReference>
<dbReference type="PROSITE" id="PS50827">
    <property type="entry name" value="DDT"/>
    <property type="match status" value="1"/>
</dbReference>
<dbReference type="PROSITE" id="PS50071">
    <property type="entry name" value="HOMEOBOX_2"/>
    <property type="match status" value="1"/>
</dbReference>
<dbReference type="PROSITE" id="PS51913">
    <property type="entry name" value="HTH_HARE"/>
    <property type="match status" value="1"/>
</dbReference>
<protein>
    <recommendedName>
        <fullName evidence="8">Homeobox-DDT domain protein RLT1</fullName>
    </recommendedName>
    <alternativeName>
        <fullName evidence="8">Protein HOMEOBOX-1</fullName>
    </alternativeName>
    <alternativeName>
        <fullName evidence="7">Protein RINGLET 1</fullName>
    </alternativeName>
</protein>
<keyword id="KW-0238">DNA-binding</keyword>
<keyword id="KW-0287">Flowering</keyword>
<keyword id="KW-0371">Homeobox</keyword>
<keyword id="KW-0539">Nucleus</keyword>
<keyword id="KW-1185">Reference proteome</keyword>
<keyword id="KW-0804">Transcription</keyword>
<keyword id="KW-0805">Transcription regulation</keyword>
<proteinExistence type="evidence at protein level"/>
<organism>
    <name type="scientific">Arabidopsis thaliana</name>
    <name type="common">Mouse-ear cress</name>
    <dbReference type="NCBI Taxonomy" id="3702"/>
    <lineage>
        <taxon>Eukaryota</taxon>
        <taxon>Viridiplantae</taxon>
        <taxon>Streptophyta</taxon>
        <taxon>Embryophyta</taxon>
        <taxon>Tracheophyta</taxon>
        <taxon>Spermatophyta</taxon>
        <taxon>Magnoliopsida</taxon>
        <taxon>eudicotyledons</taxon>
        <taxon>Gunneridae</taxon>
        <taxon>Pentapetalae</taxon>
        <taxon>rosids</taxon>
        <taxon>malvids</taxon>
        <taxon>Brassicales</taxon>
        <taxon>Brassicaceae</taxon>
        <taxon>Camelineae</taxon>
        <taxon>Arabidopsis</taxon>
    </lineage>
</organism>
<sequence length="1705" mass="191990">MEMGSDGEDQKIRSVVGDANLNNKKKKIDNNSSSKDGRVKPKRQMKTPFQLETLEKVYSEEKYPSEATRAELSEKLDLSDRQLQMWFCHRRLKDKKDGQSNKPVKSSVAAVQSASVNELPAAAGSVPEQDSRSDSGSESGCSPYSNSRRNFASGSSSSRAELDEYETMGKPSYESRLSTMVHRAIVCIEAQLGEPLRDDGPILGMEFDPLPPGAFGTPIAMQKHLLHPYESDLYERHDPRPRRSHAAARSFHEQQSLDDPSSFTPNMYERYSENHARGMDYEVARSRISSFMHANGPVPRSYVTPGHASRNCSTSQQDMPSPIESAHHGDRFLLEKDSSVLGTEDPYLLPDGVRKSSDVHRKGKINDGRLGRGSETRENHGPKDLEKLEIQRKKNEERMRKEMERNERERRKEEERLMRERIKEEERLQREQRREVERREKFLQRENERAEKKKQKDEIRREKDAIRRKLAIEKATARRIAKESMDLIEDEQLELMELAAISKGLPSVLQLDHDTLQNLEVYRDSLSTFPPKSLQLKMPFAISPWKDSDETVGNLLMVWRFLISFSDVLDLWPFTLDEFIQAFHDYDSRLLGEIHVTLLRSIIRDVEDVARTPFSGIGNNQYTTANPEGGHPQIVEGAYAWGFDIRSWKKHLNPLTWPEILRQLALSAGFGPKLKKKHSRLTNTGDKDEAKGCEDVISTIRNGTAAESAFASMREKGLLAPRKSRHRLTPGTVKFAAFHVLSLEGSKGLTVLELADKIQKSGLRDLTTSKTPEASISVALTRDVKLFERIAPSTYCVRAPYVKDPKDGEAILADARKKIRAFENGFTGPEDVNDLERDEDFEIDIDEDPEVDDLATLASASKSAVLGEANVLSGKGVDTMFCDVKADVKSELEKEFSSPPPSTMKSIVPQHSERHKNTVVGGVDAVIDESNQGQSWIQGLTEGDYCHLSVEERLNALVALVGIANEGNSIRTGLEDRMEAANALKKQMWAEAQLDNSCMRDVLKLDLQNLASSKTESTIGLPIIQSSTRERDSFDRDPSQLLDETKPLEDLSNDLHKSSAERALINQDANISQENYASKRSRSQLKSYIGHKAEEVYPYRSLPLGQDRRHNRYWHFAVSVSKSDPCSRLLFVELHDGKWLLIDSEEAFDILVASLDMRGIRESHLRIMLQKIEGSFKENACKDIKLARNPFLTEKSVVNHSPTDSVSPSSSAISGSNSDSMETSTSIRVDLGRNDTENKNLSKRFHDFQRWMWTETYSSLPSCARKYGKKRSELLATCDACVASYLSEYTFCSSCHQRLDVVDSSEILDSGLAVSPLPFGVRLLKPLLVFLEASVPDEALESFWTEDQRKKWGFRLNTSSSPGELLQVLTSLESAIKKESLSSNFMSAKELLGAANAEADDQGSVDVLPWIPKTVSAVALRLSELDASIIYVKPEKPEVIPEDENEQISLFPRDSPFKGKGPREQEDQDEVAPNPGNRNKKRARVSLGSGSNRKVKRKKAQSGLNKFVVGRRNVAVNSNLMAVELNHQVPGKGKRTVRKRPERIDEDNSHLVNRMANIVRPKSEEVEEDEEEEEQTFRDINEDWAAGETPREMEEDWANETPNRMMTPMQVDDESDNSVGVESEDEDGGGQFVDYSQRNKWGLDWNSNLNVAIEEDEEEEVVGVGRVEGEDDAEMSESSEDDDVPANNAANNYDRESEGYSSSDS</sequence>
<name>RLT1_ARATH</name>
<gene>
    <name evidence="7" type="primary">RLT1</name>
    <name evidence="8" type="synonym">HB-1</name>
    <name evidence="9 10" type="ordered locus">At1g28420</name>
</gene>
<comment type="function">
    <text evidence="5">Transcriptional regulator required for the maintenance of the plant vegetative phase. In association with CHR11 or CHR17 may prevent the early activation of the vegetative-to-reproductive transition by regulating key genes that contribute to flower timing, such as FT, SEP1, SEP3, AGL8/FUL, SOC1 and FLC.</text>
</comment>
<comment type="subunit">
    <text evidence="5 6">Interacts with CHR11 and CHR17 (PubMed:22694359). Interacts (via the DDT domain) with CHR11 (via C-terminus) (PubMed:23691993).</text>
</comment>
<comment type="subcellular location">
    <subcellularLocation>
        <location evidence="1">Nucleus</location>
    </subcellularLocation>
</comment>
<comment type="tissue specificity">
    <text evidence="5">Highly expressed in growing tissues such as inflorescence and flower meristems, young leaves and floral organs. Expressed in roots, rosette and cauline leaves, stems, flowers, inflorescences and siliques.</text>
</comment>
<comment type="disruption phenotype">
    <text evidence="5">No visible phenotype under normal growth conditions, but the double mutant plants rlt-1 and rlt2-1 are small and display early flowering.</text>
</comment>
<comment type="sequence caution" evidence="8">
    <conflict type="erroneous gene model prediction">
        <sequence resource="EMBL-CDS" id="AAF16763"/>
    </conflict>
</comment>
<evidence type="ECO:0000255" key="1">
    <source>
        <dbReference type="PROSITE-ProRule" id="PRU00063"/>
    </source>
</evidence>
<evidence type="ECO:0000255" key="2">
    <source>
        <dbReference type="PROSITE-ProRule" id="PRU00108"/>
    </source>
</evidence>
<evidence type="ECO:0000255" key="3">
    <source>
        <dbReference type="PROSITE-ProRule" id="PRU01261"/>
    </source>
</evidence>
<evidence type="ECO:0000256" key="4">
    <source>
        <dbReference type="SAM" id="MobiDB-lite"/>
    </source>
</evidence>
<evidence type="ECO:0000269" key="5">
    <source>
    </source>
</evidence>
<evidence type="ECO:0000269" key="6">
    <source>
    </source>
</evidence>
<evidence type="ECO:0000303" key="7">
    <source>
    </source>
</evidence>
<evidence type="ECO:0000305" key="8"/>
<evidence type="ECO:0000312" key="9">
    <source>
        <dbReference type="Araport" id="AT1G28420"/>
    </source>
</evidence>
<evidence type="ECO:0000312" key="10">
    <source>
        <dbReference type="EMBL" id="AEE30975.1"/>
    </source>
</evidence>